<keyword id="KW-0002">3D-structure</keyword>
<keyword id="KW-0256">Endoplasmic reticulum</keyword>
<keyword id="KW-0325">Glycoprotein</keyword>
<keyword id="KW-0328">Glycosyltransferase</keyword>
<keyword id="KW-0472">Membrane</keyword>
<keyword id="KW-1185">Reference proteome</keyword>
<keyword id="KW-0735">Signal-anchor</keyword>
<keyword id="KW-0808">Transferase</keyword>
<keyword id="KW-0812">Transmembrane</keyword>
<keyword id="KW-1133">Transmembrane helix</keyword>
<sequence>MHLSAVLNALLVSVLAAVLWKHVRLREHAASLEEELAVGRRAADPAPALRIDYPKALQILTEGGTHMVCTGRTHTDRLCRFKWLCYSSEAEEFIFFHGNASVMLPSLGSRRFQPALLDLSTVEDHNTQYFNFVELPAAALRFMPKPVFVPDVALIANRFNPDNLMHVFHDDLLPLFYTLRQFPGLAREARLFFMEGWGEGAHFDLYKLLSPKQPLLRAQLKALGRLLCFSHAFVGLSKVTTWYQYGFVQPQGPKANILVSGNEIRQFAHFLMEKLNVSQAGGPLGEEYILVFSRTQNRLILNEAELLLALAQEFQMKTVTVSLEDHAFADVVRLVSNASMLVSMHGAQLVTALFLPRGAAVVELFPYAVNPDHYTPYKTLATLPGMDLQYIAWQNTMPENTVTHPERPWDQGGIAHLDRAEQARILQSREVPRHLCCRNPEWLFRIYQDTKVDIPSLIQTIRRVVKGHPGPRKQKWTVSLYPGKVREARCQASVQGASEARLSVSWQIPWNLKYLKVREVKYEVWLQEQGENTYVPYMLALQNHTFTENIKPFTTYLVWIRCIFNKTLLGPFADVLVCST</sequence>
<gene>
    <name type="primary">POMGNT2</name>
    <name type="synonym">AGO61</name>
    <name type="synonym">GTDC2</name>
</gene>
<accession>Q5NDF2</accession>
<accession>Q08DC6</accession>
<evidence type="ECO:0000250" key="1">
    <source>
        <dbReference type="UniProtKB" id="Q8NAT1"/>
    </source>
</evidence>
<evidence type="ECO:0000255" key="2"/>
<evidence type="ECO:0000255" key="3">
    <source>
        <dbReference type="PROSITE-ProRule" id="PRU00316"/>
    </source>
</evidence>
<evidence type="ECO:0000305" key="4"/>
<evidence type="ECO:0007829" key="5">
    <source>
        <dbReference type="PDB" id="7E9K"/>
    </source>
</evidence>
<evidence type="ECO:0007829" key="6">
    <source>
        <dbReference type="PDB" id="7E9L"/>
    </source>
</evidence>
<comment type="function">
    <text evidence="1">O-linked mannose beta-1,4-N-acetylglucosaminyltransferase that transfers UDP-N-acetyl-D-glucosamine to the 4-position of the mannose to generate N-acetyl-D-glucosamine-beta-1,4-O-D-mannosylprotein. Involved in the biosynthesis of the phosphorylated O-mannosyl trisaccharide (N-acetylgalactosamine-beta-3-N-acetylglucosamine-beta-4-(phosphate-6-)mannose), a carbohydrate structure present in alpha-dystroglycan (DAG1), which is required for binding laminin G-like domain-containing extracellular proteins with high affinity (By similarity).</text>
</comment>
<comment type="catalytic activity">
    <reaction evidence="1">
        <text>3-O-(alpha-D-mannosyl)-L-threonyl-[protein] + UDP-N-acetyl-alpha-D-glucosamine = 3-O-(N-acetyl-beta-D-glucosaminyl-(1-&gt;4)-alpha-D-mannosyl)-L-threonyl-[protein] + UDP + H(+)</text>
        <dbReference type="Rhea" id="RHEA:37663"/>
        <dbReference type="Rhea" id="RHEA-COMP:13547"/>
        <dbReference type="Rhea" id="RHEA-COMP:13618"/>
        <dbReference type="ChEBI" id="CHEBI:15378"/>
        <dbReference type="ChEBI" id="CHEBI:57705"/>
        <dbReference type="ChEBI" id="CHEBI:58223"/>
        <dbReference type="ChEBI" id="CHEBI:137323"/>
        <dbReference type="ChEBI" id="CHEBI:137540"/>
        <dbReference type="EC" id="2.4.1.312"/>
    </reaction>
</comment>
<comment type="pathway">
    <text evidence="1">Protein modification; protein glycosylation.</text>
</comment>
<comment type="subcellular location">
    <subcellularLocation>
        <location evidence="1">Endoplasmic reticulum membrane</location>
        <topology evidence="1">Single-pass type II membrane protein</topology>
    </subcellularLocation>
</comment>
<comment type="similarity">
    <text evidence="4">Belongs to the glycosyltransferase 61 family.</text>
</comment>
<reference key="1">
    <citation type="submission" date="2004-12" db="EMBL/GenBank/DDBJ databases">
        <title>Phylogeny of xylosyltransferases.</title>
        <authorList>
            <person name="Kiefer-Meyer M.C."/>
            <person name="Pagny S."/>
            <person name="Durambure G."/>
            <person name="Faye L."/>
            <person name="Gomord V."/>
            <person name="Mollicone R."/>
            <person name="Oriol R."/>
        </authorList>
    </citation>
    <scope>NUCLEOTIDE SEQUENCE [MRNA]</scope>
</reference>
<reference key="2">
    <citation type="submission" date="2006-09" db="EMBL/GenBank/DDBJ databases">
        <authorList>
            <consortium name="NIH - Mammalian Gene Collection (MGC) project"/>
        </authorList>
    </citation>
    <scope>NUCLEOTIDE SEQUENCE [LARGE SCALE MRNA]</scope>
    <source>
        <strain>Hereford</strain>
        <tissue>Basal ganglia</tissue>
    </source>
</reference>
<feature type="chain" id="PRO_0000249012" description="Protein O-linked-mannose beta-1,4-N-acetylglucosaminyltransferase 2">
    <location>
        <begin position="1"/>
        <end position="580"/>
    </location>
</feature>
<feature type="topological domain" description="Cytoplasmic" evidence="2">
    <location>
        <begin position="1"/>
        <end position="4"/>
    </location>
</feature>
<feature type="transmembrane region" description="Helical; Signal-anchor for type II membrane protein" evidence="2">
    <location>
        <begin position="5"/>
        <end position="25"/>
    </location>
</feature>
<feature type="topological domain" description="Lumenal" evidence="2">
    <location>
        <begin position="26"/>
        <end position="580"/>
    </location>
</feature>
<feature type="domain" description="Fibronectin type-III" evidence="3">
    <location>
        <begin position="488"/>
        <end position="580"/>
    </location>
</feature>
<feature type="glycosylation site" description="N-linked (GlcNAc...) asparagine" evidence="2">
    <location>
        <position position="99"/>
    </location>
</feature>
<feature type="glycosylation site" description="N-linked (GlcNAc...) asparagine" evidence="2">
    <location>
        <position position="276"/>
    </location>
</feature>
<feature type="helix" evidence="5">
    <location>
        <begin position="53"/>
        <end position="63"/>
    </location>
</feature>
<feature type="strand" evidence="5">
    <location>
        <begin position="66"/>
        <end position="69"/>
    </location>
</feature>
<feature type="helix" evidence="5">
    <location>
        <begin position="74"/>
        <end position="76"/>
    </location>
</feature>
<feature type="strand" evidence="5">
    <location>
        <begin position="79"/>
        <end position="87"/>
    </location>
</feature>
<feature type="turn" evidence="5">
    <location>
        <begin position="88"/>
        <end position="91"/>
    </location>
</feature>
<feature type="strand" evidence="5">
    <location>
        <begin position="92"/>
        <end position="97"/>
    </location>
</feature>
<feature type="strand" evidence="5">
    <location>
        <begin position="102"/>
        <end position="105"/>
    </location>
</feature>
<feature type="helix" evidence="5">
    <location>
        <begin position="108"/>
        <end position="112"/>
    </location>
</feature>
<feature type="strand" evidence="5">
    <location>
        <begin position="116"/>
        <end position="122"/>
    </location>
</feature>
<feature type="strand" evidence="5">
    <location>
        <begin position="128"/>
        <end position="130"/>
    </location>
</feature>
<feature type="strand" evidence="5">
    <location>
        <begin position="132"/>
        <end position="136"/>
    </location>
</feature>
<feature type="helix" evidence="5">
    <location>
        <begin position="137"/>
        <end position="142"/>
    </location>
</feature>
<feature type="strand" evidence="5">
    <location>
        <begin position="147"/>
        <end position="149"/>
    </location>
</feature>
<feature type="strand" evidence="5">
    <location>
        <begin position="153"/>
        <end position="156"/>
    </location>
</feature>
<feature type="helix" evidence="5">
    <location>
        <begin position="164"/>
        <end position="170"/>
    </location>
</feature>
<feature type="helix" evidence="5">
    <location>
        <begin position="172"/>
        <end position="179"/>
    </location>
</feature>
<feature type="helix" evidence="5">
    <location>
        <begin position="185"/>
        <end position="188"/>
    </location>
</feature>
<feature type="strand" evidence="5">
    <location>
        <begin position="190"/>
        <end position="193"/>
    </location>
</feature>
<feature type="helix" evidence="5">
    <location>
        <begin position="203"/>
        <end position="207"/>
    </location>
</feature>
<feature type="helix" evidence="5">
    <location>
        <begin position="217"/>
        <end position="219"/>
    </location>
</feature>
<feature type="helix" evidence="5">
    <location>
        <begin position="220"/>
        <end position="223"/>
    </location>
</feature>
<feature type="strand" evidence="5">
    <location>
        <begin position="225"/>
        <end position="234"/>
    </location>
</feature>
<feature type="strand" evidence="5">
    <location>
        <begin position="246"/>
        <end position="253"/>
    </location>
</feature>
<feature type="helix" evidence="5">
    <location>
        <begin position="261"/>
        <end position="274"/>
    </location>
</feature>
<feature type="strand" evidence="5">
    <location>
        <begin position="288"/>
        <end position="292"/>
    </location>
</feature>
<feature type="strand" evidence="5">
    <location>
        <begin position="295"/>
        <end position="298"/>
    </location>
</feature>
<feature type="helix" evidence="5">
    <location>
        <begin position="303"/>
        <end position="314"/>
    </location>
</feature>
<feature type="strand" evidence="5">
    <location>
        <begin position="316"/>
        <end position="321"/>
    </location>
</feature>
<feature type="turn" evidence="5">
    <location>
        <begin position="323"/>
        <end position="325"/>
    </location>
</feature>
<feature type="helix" evidence="5">
    <location>
        <begin position="328"/>
        <end position="335"/>
    </location>
</feature>
<feature type="strand" evidence="5">
    <location>
        <begin position="339"/>
        <end position="346"/>
    </location>
</feature>
<feature type="helix" evidence="5">
    <location>
        <begin position="347"/>
        <end position="354"/>
    </location>
</feature>
<feature type="strand" evidence="5">
    <location>
        <begin position="360"/>
        <end position="365"/>
    </location>
</feature>
<feature type="helix" evidence="5">
    <location>
        <begin position="371"/>
        <end position="373"/>
    </location>
</feature>
<feature type="helix" evidence="5">
    <location>
        <begin position="376"/>
        <end position="381"/>
    </location>
</feature>
<feature type="turn" evidence="5">
    <location>
        <begin position="384"/>
        <end position="386"/>
    </location>
</feature>
<feature type="strand" evidence="5">
    <location>
        <begin position="389"/>
        <end position="394"/>
    </location>
</feature>
<feature type="helix" evidence="5">
    <location>
        <begin position="398"/>
        <end position="400"/>
    </location>
</feature>
<feature type="helix" evidence="5">
    <location>
        <begin position="409"/>
        <end position="411"/>
    </location>
</feature>
<feature type="helix" evidence="5">
    <location>
        <begin position="419"/>
        <end position="427"/>
    </location>
</feature>
<feature type="helix" evidence="5">
    <location>
        <begin position="440"/>
        <end position="446"/>
    </location>
</feature>
<feature type="helix" evidence="5">
    <location>
        <begin position="454"/>
        <end position="462"/>
    </location>
</feature>
<feature type="strand" evidence="5">
    <location>
        <begin position="486"/>
        <end position="491"/>
    </location>
</feature>
<feature type="strand" evidence="5">
    <location>
        <begin position="502"/>
        <end position="507"/>
    </location>
</feature>
<feature type="helix" evidence="5">
    <location>
        <begin position="510"/>
        <end position="514"/>
    </location>
</feature>
<feature type="strand" evidence="5">
    <location>
        <begin position="520"/>
        <end position="528"/>
    </location>
</feature>
<feature type="strand" evidence="5">
    <location>
        <begin position="534"/>
        <end position="546"/>
    </location>
</feature>
<feature type="strand" evidence="5">
    <location>
        <begin position="555"/>
        <end position="564"/>
    </location>
</feature>
<feature type="turn" evidence="5">
    <location>
        <begin position="565"/>
        <end position="567"/>
    </location>
</feature>
<feature type="strand" evidence="6">
    <location>
        <begin position="568"/>
        <end position="572"/>
    </location>
</feature>
<feature type="strand" evidence="5">
    <location>
        <begin position="576"/>
        <end position="579"/>
    </location>
</feature>
<organism>
    <name type="scientific">Bos taurus</name>
    <name type="common">Bovine</name>
    <dbReference type="NCBI Taxonomy" id="9913"/>
    <lineage>
        <taxon>Eukaryota</taxon>
        <taxon>Metazoa</taxon>
        <taxon>Chordata</taxon>
        <taxon>Craniata</taxon>
        <taxon>Vertebrata</taxon>
        <taxon>Euteleostomi</taxon>
        <taxon>Mammalia</taxon>
        <taxon>Eutheria</taxon>
        <taxon>Laurasiatheria</taxon>
        <taxon>Artiodactyla</taxon>
        <taxon>Ruminantia</taxon>
        <taxon>Pecora</taxon>
        <taxon>Bovidae</taxon>
        <taxon>Bovinae</taxon>
        <taxon>Bos</taxon>
    </lineage>
</organism>
<dbReference type="EC" id="2.4.1.312" evidence="1"/>
<dbReference type="EMBL" id="AJ868532">
    <property type="protein sequence ID" value="CAI30866.1"/>
    <property type="molecule type" value="mRNA"/>
</dbReference>
<dbReference type="EMBL" id="BC123822">
    <property type="protein sequence ID" value="AAI23823.1"/>
    <property type="molecule type" value="mRNA"/>
</dbReference>
<dbReference type="RefSeq" id="NP_001011682.1">
    <property type="nucleotide sequence ID" value="NM_001011682.2"/>
</dbReference>
<dbReference type="RefSeq" id="XP_005222438.1">
    <property type="nucleotide sequence ID" value="XM_005222381.5"/>
</dbReference>
<dbReference type="PDB" id="7E9J">
    <property type="method" value="X-ray"/>
    <property type="resolution" value="2.40 A"/>
    <property type="chains" value="A/B=45-580"/>
</dbReference>
<dbReference type="PDB" id="7E9K">
    <property type="method" value="X-ray"/>
    <property type="resolution" value="2.05 A"/>
    <property type="chains" value="A/B/D/E=45-580"/>
</dbReference>
<dbReference type="PDB" id="7E9L">
    <property type="method" value="X-ray"/>
    <property type="resolution" value="2.10 A"/>
    <property type="chains" value="A/B=45-580"/>
</dbReference>
<dbReference type="PDBsum" id="7E9J"/>
<dbReference type="PDBsum" id="7E9K"/>
<dbReference type="PDBsum" id="7E9L"/>
<dbReference type="SMR" id="Q5NDF2"/>
<dbReference type="FunCoup" id="Q5NDF2">
    <property type="interactions" value="416"/>
</dbReference>
<dbReference type="STRING" id="9913.ENSBTAP00000000583"/>
<dbReference type="CAZy" id="GT61">
    <property type="family name" value="Glycosyltransferase Family 61"/>
</dbReference>
<dbReference type="GlyCosmos" id="Q5NDF2">
    <property type="glycosylation" value="2 sites, No reported glycans"/>
</dbReference>
<dbReference type="GlyGen" id="Q5NDF2">
    <property type="glycosylation" value="2 sites"/>
</dbReference>
<dbReference type="PaxDb" id="9913-ENSBTAP00000000583"/>
<dbReference type="Ensembl" id="ENSBTAT00000091016.1">
    <property type="protein sequence ID" value="ENSBTAP00000082500.1"/>
    <property type="gene ID" value="ENSBTAG00000000459.7"/>
</dbReference>
<dbReference type="Ensembl" id="ENSBTAT00000100752.1">
    <property type="protein sequence ID" value="ENSBTAP00000074766.1"/>
    <property type="gene ID" value="ENSBTAG00000000459.7"/>
</dbReference>
<dbReference type="Ensembl" id="ENSBTAT00000115741.1">
    <property type="protein sequence ID" value="ENSBTAP00000090648.1"/>
    <property type="gene ID" value="ENSBTAG00000000459.7"/>
</dbReference>
<dbReference type="GeneID" id="497030"/>
<dbReference type="KEGG" id="bta:497030"/>
<dbReference type="CTD" id="84892"/>
<dbReference type="VEuPathDB" id="HostDB:ENSBTAG00000000459"/>
<dbReference type="VGNC" id="VGNC:111294">
    <property type="gene designation" value="POMGNT2"/>
</dbReference>
<dbReference type="eggNOG" id="KOG4698">
    <property type="taxonomic scope" value="Eukaryota"/>
</dbReference>
<dbReference type="GeneTree" id="ENSGT00940000160695"/>
<dbReference type="HOGENOM" id="CLU_020169_0_0_1"/>
<dbReference type="InParanoid" id="Q5NDF2"/>
<dbReference type="OMA" id="EFQMRVV"/>
<dbReference type="OrthoDB" id="529273at2759"/>
<dbReference type="TreeFam" id="TF332712"/>
<dbReference type="Reactome" id="R-BTA-5173105">
    <property type="pathway name" value="O-linked glycosylation"/>
</dbReference>
<dbReference type="UniPathway" id="UPA00378"/>
<dbReference type="Proteomes" id="UP000009136">
    <property type="component" value="Chromosome 22"/>
</dbReference>
<dbReference type="Bgee" id="ENSBTAG00000000459">
    <property type="expression patterns" value="Expressed in floor plate of diencephalon and 102 other cell types or tissues"/>
</dbReference>
<dbReference type="GO" id="GO:0005783">
    <property type="term" value="C:endoplasmic reticulum"/>
    <property type="evidence" value="ECO:0000250"/>
    <property type="project" value="UniProtKB"/>
</dbReference>
<dbReference type="GO" id="GO:0005789">
    <property type="term" value="C:endoplasmic reticulum membrane"/>
    <property type="evidence" value="ECO:0007669"/>
    <property type="project" value="UniProtKB-SubCell"/>
</dbReference>
<dbReference type="GO" id="GO:0008375">
    <property type="term" value="F:acetylglucosaminyltransferase activity"/>
    <property type="evidence" value="ECO:0000250"/>
    <property type="project" value="UniProtKB"/>
</dbReference>
<dbReference type="GO" id="GO:0097363">
    <property type="term" value="F:protein O-acetylglucosaminyltransferase activity"/>
    <property type="evidence" value="ECO:0000318"/>
    <property type="project" value="GO_Central"/>
</dbReference>
<dbReference type="GO" id="GO:0001764">
    <property type="term" value="P:neuron migration"/>
    <property type="evidence" value="ECO:0000250"/>
    <property type="project" value="UniProtKB"/>
</dbReference>
<dbReference type="GO" id="GO:0006493">
    <property type="term" value="P:protein O-linked glycosylation"/>
    <property type="evidence" value="ECO:0000250"/>
    <property type="project" value="UniProtKB"/>
</dbReference>
<dbReference type="GO" id="GO:0035269">
    <property type="term" value="P:protein O-linked mannosylation"/>
    <property type="evidence" value="ECO:0000250"/>
    <property type="project" value="UniProtKB"/>
</dbReference>
<dbReference type="CDD" id="cd00063">
    <property type="entry name" value="FN3"/>
    <property type="match status" value="1"/>
</dbReference>
<dbReference type="Gene3D" id="2.60.40.10">
    <property type="entry name" value="Immunoglobulins"/>
    <property type="match status" value="1"/>
</dbReference>
<dbReference type="InterPro" id="IPR003961">
    <property type="entry name" value="FN3_dom"/>
</dbReference>
<dbReference type="InterPro" id="IPR036116">
    <property type="entry name" value="FN3_sf"/>
</dbReference>
<dbReference type="InterPro" id="IPR049625">
    <property type="entry name" value="Glyco_transf_61_cat"/>
</dbReference>
<dbReference type="InterPro" id="IPR007657">
    <property type="entry name" value="Glycosyltransferase_61"/>
</dbReference>
<dbReference type="InterPro" id="IPR013783">
    <property type="entry name" value="Ig-like_fold"/>
</dbReference>
<dbReference type="PANTHER" id="PTHR20961">
    <property type="entry name" value="GLYCOSYLTRANSFERASE"/>
    <property type="match status" value="1"/>
</dbReference>
<dbReference type="PANTHER" id="PTHR20961:SF38">
    <property type="entry name" value="PROTEIN O-LINKED-MANNOSE BETA-1,4-N-ACETYLGLUCOSAMINYLTRANSFERASE 2"/>
    <property type="match status" value="1"/>
</dbReference>
<dbReference type="Pfam" id="PF04577">
    <property type="entry name" value="Glyco_transf_61"/>
    <property type="match status" value="1"/>
</dbReference>
<dbReference type="SUPFAM" id="SSF49265">
    <property type="entry name" value="Fibronectin type III"/>
    <property type="match status" value="1"/>
</dbReference>
<dbReference type="PROSITE" id="PS50853">
    <property type="entry name" value="FN3"/>
    <property type="match status" value="1"/>
</dbReference>
<name>PMGT2_BOVIN</name>
<protein>
    <recommendedName>
        <fullName>Protein O-linked-mannose beta-1,4-N-acetylglucosaminyltransferase 2</fullName>
        <shortName>POMGnT2</shortName>
        <ecNumber evidence="1">2.4.1.312</ecNumber>
    </recommendedName>
    <alternativeName>
        <fullName>Extracellular O-linked N-acetylglucosamine transferase-like</fullName>
    </alternativeName>
    <alternativeName>
        <fullName>Glycosyltransferase-like domain-containing protein 2</fullName>
    </alternativeName>
</protein>
<proteinExistence type="evidence at protein level"/>